<dbReference type="EMBL" id="AL049524">
    <property type="protein sequence ID" value="CAB40038.1"/>
    <property type="molecule type" value="Genomic_DNA"/>
</dbReference>
<dbReference type="EMBL" id="AL161517">
    <property type="protein sequence ID" value="CAB78168.1"/>
    <property type="molecule type" value="Genomic_DNA"/>
</dbReference>
<dbReference type="EMBL" id="CP002687">
    <property type="protein sequence ID" value="AEE82884.1"/>
    <property type="molecule type" value="Genomic_DNA"/>
</dbReference>
<dbReference type="EMBL" id="AY065259">
    <property type="protein sequence ID" value="AAL38735.1"/>
    <property type="molecule type" value="mRNA"/>
</dbReference>
<dbReference type="EMBL" id="AY117346">
    <property type="protein sequence ID" value="AAM51421.1"/>
    <property type="molecule type" value="mRNA"/>
</dbReference>
<dbReference type="EMBL" id="AY086090">
    <property type="protein sequence ID" value="AAM63297.1"/>
    <property type="molecule type" value="mRNA"/>
</dbReference>
<dbReference type="PIR" id="T04180">
    <property type="entry name" value="T04180"/>
</dbReference>
<dbReference type="RefSeq" id="NP_192783.1">
    <property type="nucleotide sequence ID" value="NM_117113.4"/>
</dbReference>
<dbReference type="SMR" id="Q9SZX9"/>
<dbReference type="BioGRID" id="11936">
    <property type="interactions" value="129"/>
</dbReference>
<dbReference type="FunCoup" id="Q9SZX9">
    <property type="interactions" value="2947"/>
</dbReference>
<dbReference type="IntAct" id="Q9SZX9">
    <property type="interactions" value="1"/>
</dbReference>
<dbReference type="STRING" id="3702.Q9SZX9"/>
<dbReference type="PaxDb" id="3702-AT4G10450.1"/>
<dbReference type="EnsemblPlants" id="AT4G10450.1">
    <property type="protein sequence ID" value="AT4G10450.1"/>
    <property type="gene ID" value="AT4G10450"/>
</dbReference>
<dbReference type="GeneID" id="826637"/>
<dbReference type="Gramene" id="AT4G10450.1">
    <property type="protein sequence ID" value="AT4G10450.1"/>
    <property type="gene ID" value="AT4G10450"/>
</dbReference>
<dbReference type="KEGG" id="ath:AT4G10450"/>
<dbReference type="Araport" id="AT4G10450"/>
<dbReference type="TAIR" id="AT4G10450"/>
<dbReference type="eggNOG" id="KOG3255">
    <property type="taxonomic scope" value="Eukaryota"/>
</dbReference>
<dbReference type="HOGENOM" id="CLU_065464_0_0_1"/>
<dbReference type="InParanoid" id="Q9SZX9"/>
<dbReference type="OMA" id="SITHTNK"/>
<dbReference type="OrthoDB" id="1037637at2759"/>
<dbReference type="PhylomeDB" id="Q9SZX9"/>
<dbReference type="CD-CODE" id="4299E36E">
    <property type="entry name" value="Nucleolus"/>
</dbReference>
<dbReference type="PRO" id="PR:Q9SZX9"/>
<dbReference type="Proteomes" id="UP000006548">
    <property type="component" value="Chromosome 4"/>
</dbReference>
<dbReference type="ExpressionAtlas" id="Q9SZX9">
    <property type="expression patterns" value="baseline and differential"/>
</dbReference>
<dbReference type="GO" id="GO:0005829">
    <property type="term" value="C:cytosol"/>
    <property type="evidence" value="ECO:0007005"/>
    <property type="project" value="TAIR"/>
</dbReference>
<dbReference type="GO" id="GO:0022625">
    <property type="term" value="C:cytosolic large ribosomal subunit"/>
    <property type="evidence" value="ECO:0007005"/>
    <property type="project" value="TAIR"/>
</dbReference>
<dbReference type="GO" id="GO:0022626">
    <property type="term" value="C:cytosolic ribosome"/>
    <property type="evidence" value="ECO:0007005"/>
    <property type="project" value="TAIR"/>
</dbReference>
<dbReference type="GO" id="GO:0003729">
    <property type="term" value="F:mRNA binding"/>
    <property type="evidence" value="ECO:0000314"/>
    <property type="project" value="TAIR"/>
</dbReference>
<dbReference type="GO" id="GO:0019843">
    <property type="term" value="F:rRNA binding"/>
    <property type="evidence" value="ECO:0007669"/>
    <property type="project" value="InterPro"/>
</dbReference>
<dbReference type="GO" id="GO:0003735">
    <property type="term" value="F:structural constituent of ribosome"/>
    <property type="evidence" value="ECO:0000314"/>
    <property type="project" value="CAFA"/>
</dbReference>
<dbReference type="GO" id="GO:0006412">
    <property type="term" value="P:translation"/>
    <property type="evidence" value="ECO:0007669"/>
    <property type="project" value="InterPro"/>
</dbReference>
<dbReference type="FunFam" id="3.90.930.12:FF:000003">
    <property type="entry name" value="60S ribosomal protein L9"/>
    <property type="match status" value="1"/>
</dbReference>
<dbReference type="FunFam" id="3.90.930.12:FF:000004">
    <property type="entry name" value="60S ribosomal protein L9"/>
    <property type="match status" value="1"/>
</dbReference>
<dbReference type="Gene3D" id="3.90.930.12">
    <property type="entry name" value="Ribosomal protein L6, alpha-beta domain"/>
    <property type="match status" value="2"/>
</dbReference>
<dbReference type="InterPro" id="IPR000702">
    <property type="entry name" value="Ribosomal_uL6-like"/>
</dbReference>
<dbReference type="InterPro" id="IPR036789">
    <property type="entry name" value="Ribosomal_uL6-like_a/b-dom_sf"/>
</dbReference>
<dbReference type="InterPro" id="IPR020040">
    <property type="entry name" value="Ribosomal_uL6_a/b-dom"/>
</dbReference>
<dbReference type="InterPro" id="IPR002359">
    <property type="entry name" value="Ribosomal_uL6_CS2"/>
</dbReference>
<dbReference type="PANTHER" id="PTHR11655">
    <property type="entry name" value="60S/50S RIBOSOMAL PROTEIN L6/L9"/>
    <property type="match status" value="1"/>
</dbReference>
<dbReference type="PANTHER" id="PTHR11655:SF43">
    <property type="entry name" value="LARGE RIBOSOMAL SUBUNIT PROTEIN UL6X"/>
    <property type="match status" value="1"/>
</dbReference>
<dbReference type="Pfam" id="PF00347">
    <property type="entry name" value="Ribosomal_L6"/>
    <property type="match status" value="2"/>
</dbReference>
<dbReference type="PIRSF" id="PIRSF002162">
    <property type="entry name" value="Ribosomal_L6"/>
    <property type="match status" value="1"/>
</dbReference>
<dbReference type="SUPFAM" id="SSF56053">
    <property type="entry name" value="Ribosomal protein L6"/>
    <property type="match status" value="2"/>
</dbReference>
<dbReference type="PROSITE" id="PS00700">
    <property type="entry name" value="RIBOSOMAL_L6_2"/>
    <property type="match status" value="1"/>
</dbReference>
<organism>
    <name type="scientific">Arabidopsis thaliana</name>
    <name type="common">Mouse-ear cress</name>
    <dbReference type="NCBI Taxonomy" id="3702"/>
    <lineage>
        <taxon>Eukaryota</taxon>
        <taxon>Viridiplantae</taxon>
        <taxon>Streptophyta</taxon>
        <taxon>Embryophyta</taxon>
        <taxon>Tracheophyta</taxon>
        <taxon>Spermatophyta</taxon>
        <taxon>Magnoliopsida</taxon>
        <taxon>eudicotyledons</taxon>
        <taxon>Gunneridae</taxon>
        <taxon>Pentapetalae</taxon>
        <taxon>rosids</taxon>
        <taxon>malvids</taxon>
        <taxon>Brassicales</taxon>
        <taxon>Brassicaceae</taxon>
        <taxon>Camelineae</taxon>
        <taxon>Arabidopsis</taxon>
    </lineage>
</organism>
<gene>
    <name type="primary">RPL9D</name>
    <name type="ordered locus">At4g10450</name>
    <name type="ORF">F7L13.30</name>
</gene>
<protein>
    <recommendedName>
        <fullName evidence="2">Large ribosomal subunit protein uL6x</fullName>
    </recommendedName>
    <alternativeName>
        <fullName>60S ribosomal protein L9-2</fullName>
    </alternativeName>
</protein>
<accession>Q9SZX9</accession>
<feature type="chain" id="PRO_0000239929" description="Large ribosomal subunit protein uL6x">
    <location>
        <begin position="1"/>
        <end position="194"/>
    </location>
</feature>
<feature type="modified residue" description="Phosphothreonine" evidence="1">
    <location>
        <position position="75"/>
    </location>
</feature>
<keyword id="KW-0597">Phosphoprotein</keyword>
<keyword id="KW-1185">Reference proteome</keyword>
<keyword id="KW-0687">Ribonucleoprotein</keyword>
<keyword id="KW-0689">Ribosomal protein</keyword>
<sequence>MKTILSSETMDIPDGVAIKVNAKVIEVEGPRGKLTRDFKHLNLDFQLIKDQVTGKRQLKIDSWFGSRKTSASIRTALSHVDNLIAGVTQGFLYRMRFVYAHFPINASIDGNNKSIEIRNFLGEKKVRKVEMLDGVKIVRSEKVKDEIILEGNDIELVSRSCALINQKCHVKKKDIRKFLDGIYVSEKGKIAVEE</sequence>
<reference key="1">
    <citation type="journal article" date="1999" name="Nature">
        <title>Sequence and analysis of chromosome 4 of the plant Arabidopsis thaliana.</title>
        <authorList>
            <person name="Mayer K.F.X."/>
            <person name="Schueller C."/>
            <person name="Wambutt R."/>
            <person name="Murphy G."/>
            <person name="Volckaert G."/>
            <person name="Pohl T."/>
            <person name="Duesterhoeft A."/>
            <person name="Stiekema W."/>
            <person name="Entian K.-D."/>
            <person name="Terryn N."/>
            <person name="Harris B."/>
            <person name="Ansorge W."/>
            <person name="Brandt P."/>
            <person name="Grivell L.A."/>
            <person name="Rieger M."/>
            <person name="Weichselgartner M."/>
            <person name="de Simone V."/>
            <person name="Obermaier B."/>
            <person name="Mache R."/>
            <person name="Mueller M."/>
            <person name="Kreis M."/>
            <person name="Delseny M."/>
            <person name="Puigdomenech P."/>
            <person name="Watson M."/>
            <person name="Schmidtheini T."/>
            <person name="Reichert B."/>
            <person name="Portetelle D."/>
            <person name="Perez-Alonso M."/>
            <person name="Boutry M."/>
            <person name="Bancroft I."/>
            <person name="Vos P."/>
            <person name="Hoheisel J."/>
            <person name="Zimmermann W."/>
            <person name="Wedler H."/>
            <person name="Ridley P."/>
            <person name="Langham S.-A."/>
            <person name="McCullagh B."/>
            <person name="Bilham L."/>
            <person name="Robben J."/>
            <person name="van der Schueren J."/>
            <person name="Grymonprez B."/>
            <person name="Chuang Y.-J."/>
            <person name="Vandenbussche F."/>
            <person name="Braeken M."/>
            <person name="Weltjens I."/>
            <person name="Voet M."/>
            <person name="Bastiaens I."/>
            <person name="Aert R."/>
            <person name="Defoor E."/>
            <person name="Weitzenegger T."/>
            <person name="Bothe G."/>
            <person name="Ramsperger U."/>
            <person name="Hilbert H."/>
            <person name="Braun M."/>
            <person name="Holzer E."/>
            <person name="Brandt A."/>
            <person name="Peters S."/>
            <person name="van Staveren M."/>
            <person name="Dirkse W."/>
            <person name="Mooijman P."/>
            <person name="Klein Lankhorst R."/>
            <person name="Rose M."/>
            <person name="Hauf J."/>
            <person name="Koetter P."/>
            <person name="Berneiser S."/>
            <person name="Hempel S."/>
            <person name="Feldpausch M."/>
            <person name="Lamberth S."/>
            <person name="Van den Daele H."/>
            <person name="De Keyser A."/>
            <person name="Buysshaert C."/>
            <person name="Gielen J."/>
            <person name="Villarroel R."/>
            <person name="De Clercq R."/>
            <person name="van Montagu M."/>
            <person name="Rogers J."/>
            <person name="Cronin A."/>
            <person name="Quail M.A."/>
            <person name="Bray-Allen S."/>
            <person name="Clark L."/>
            <person name="Doggett J."/>
            <person name="Hall S."/>
            <person name="Kay M."/>
            <person name="Lennard N."/>
            <person name="McLay K."/>
            <person name="Mayes R."/>
            <person name="Pettett A."/>
            <person name="Rajandream M.A."/>
            <person name="Lyne M."/>
            <person name="Benes V."/>
            <person name="Rechmann S."/>
            <person name="Borkova D."/>
            <person name="Bloecker H."/>
            <person name="Scharfe M."/>
            <person name="Grimm M."/>
            <person name="Loehnert T.-H."/>
            <person name="Dose S."/>
            <person name="de Haan M."/>
            <person name="Maarse A.C."/>
            <person name="Schaefer M."/>
            <person name="Mueller-Auer S."/>
            <person name="Gabel C."/>
            <person name="Fuchs M."/>
            <person name="Fartmann B."/>
            <person name="Granderath K."/>
            <person name="Dauner D."/>
            <person name="Herzl A."/>
            <person name="Neumann S."/>
            <person name="Argiriou A."/>
            <person name="Vitale D."/>
            <person name="Liguori R."/>
            <person name="Piravandi E."/>
            <person name="Massenet O."/>
            <person name="Quigley F."/>
            <person name="Clabauld G."/>
            <person name="Muendlein A."/>
            <person name="Felber R."/>
            <person name="Schnabl S."/>
            <person name="Hiller R."/>
            <person name="Schmidt W."/>
            <person name="Lecharny A."/>
            <person name="Aubourg S."/>
            <person name="Chefdor F."/>
            <person name="Cooke R."/>
            <person name="Berger C."/>
            <person name="Monfort A."/>
            <person name="Casacuberta E."/>
            <person name="Gibbons T."/>
            <person name="Weber N."/>
            <person name="Vandenbol M."/>
            <person name="Bargues M."/>
            <person name="Terol J."/>
            <person name="Torres A."/>
            <person name="Perez-Perez A."/>
            <person name="Purnelle B."/>
            <person name="Bent E."/>
            <person name="Johnson S."/>
            <person name="Tacon D."/>
            <person name="Jesse T."/>
            <person name="Heijnen L."/>
            <person name="Schwarz S."/>
            <person name="Scholler P."/>
            <person name="Heber S."/>
            <person name="Francs P."/>
            <person name="Bielke C."/>
            <person name="Frishman D."/>
            <person name="Haase D."/>
            <person name="Lemcke K."/>
            <person name="Mewes H.-W."/>
            <person name="Stocker S."/>
            <person name="Zaccaria P."/>
            <person name="Bevan M."/>
            <person name="Wilson R.K."/>
            <person name="de la Bastide M."/>
            <person name="Habermann K."/>
            <person name="Parnell L."/>
            <person name="Dedhia N."/>
            <person name="Gnoj L."/>
            <person name="Schutz K."/>
            <person name="Huang E."/>
            <person name="Spiegel L."/>
            <person name="Sekhon M."/>
            <person name="Murray J."/>
            <person name="Sheet P."/>
            <person name="Cordes M."/>
            <person name="Abu-Threideh J."/>
            <person name="Stoneking T."/>
            <person name="Kalicki J."/>
            <person name="Graves T."/>
            <person name="Harmon G."/>
            <person name="Edwards J."/>
            <person name="Latreille P."/>
            <person name="Courtney L."/>
            <person name="Cloud J."/>
            <person name="Abbott A."/>
            <person name="Scott K."/>
            <person name="Johnson D."/>
            <person name="Minx P."/>
            <person name="Bentley D."/>
            <person name="Fulton B."/>
            <person name="Miller N."/>
            <person name="Greco T."/>
            <person name="Kemp K."/>
            <person name="Kramer J."/>
            <person name="Fulton L."/>
            <person name="Mardis E."/>
            <person name="Dante M."/>
            <person name="Pepin K."/>
            <person name="Hillier L.W."/>
            <person name="Nelson J."/>
            <person name="Spieth J."/>
            <person name="Ryan E."/>
            <person name="Andrews S."/>
            <person name="Geisel C."/>
            <person name="Layman D."/>
            <person name="Du H."/>
            <person name="Ali J."/>
            <person name="Berghoff A."/>
            <person name="Jones K."/>
            <person name="Drone K."/>
            <person name="Cotton M."/>
            <person name="Joshu C."/>
            <person name="Antonoiu B."/>
            <person name="Zidanic M."/>
            <person name="Strong C."/>
            <person name="Sun H."/>
            <person name="Lamar B."/>
            <person name="Yordan C."/>
            <person name="Ma P."/>
            <person name="Zhong J."/>
            <person name="Preston R."/>
            <person name="Vil D."/>
            <person name="Shekher M."/>
            <person name="Matero A."/>
            <person name="Shah R."/>
            <person name="Swaby I.K."/>
            <person name="O'Shaughnessy A."/>
            <person name="Rodriguez M."/>
            <person name="Hoffman J."/>
            <person name="Till S."/>
            <person name="Granat S."/>
            <person name="Shohdy N."/>
            <person name="Hasegawa A."/>
            <person name="Hameed A."/>
            <person name="Lodhi M."/>
            <person name="Johnson A."/>
            <person name="Chen E."/>
            <person name="Marra M.A."/>
            <person name="Martienssen R."/>
            <person name="McCombie W.R."/>
        </authorList>
    </citation>
    <scope>NUCLEOTIDE SEQUENCE [LARGE SCALE GENOMIC DNA]</scope>
    <source>
        <strain>cv. Columbia</strain>
    </source>
</reference>
<reference key="2">
    <citation type="journal article" date="2017" name="Plant J.">
        <title>Araport11: a complete reannotation of the Arabidopsis thaliana reference genome.</title>
        <authorList>
            <person name="Cheng C.Y."/>
            <person name="Krishnakumar V."/>
            <person name="Chan A.P."/>
            <person name="Thibaud-Nissen F."/>
            <person name="Schobel S."/>
            <person name="Town C.D."/>
        </authorList>
    </citation>
    <scope>GENOME REANNOTATION</scope>
    <source>
        <strain>cv. Columbia</strain>
    </source>
</reference>
<reference key="3">
    <citation type="journal article" date="2003" name="Science">
        <title>Empirical analysis of transcriptional activity in the Arabidopsis genome.</title>
        <authorList>
            <person name="Yamada K."/>
            <person name="Lim J."/>
            <person name="Dale J.M."/>
            <person name="Chen H."/>
            <person name="Shinn P."/>
            <person name="Palm C.J."/>
            <person name="Southwick A.M."/>
            <person name="Wu H.C."/>
            <person name="Kim C.J."/>
            <person name="Nguyen M."/>
            <person name="Pham P.K."/>
            <person name="Cheuk R.F."/>
            <person name="Karlin-Newmann G."/>
            <person name="Liu S.X."/>
            <person name="Lam B."/>
            <person name="Sakano H."/>
            <person name="Wu T."/>
            <person name="Yu G."/>
            <person name="Miranda M."/>
            <person name="Quach H.L."/>
            <person name="Tripp M."/>
            <person name="Chang C.H."/>
            <person name="Lee J.M."/>
            <person name="Toriumi M.J."/>
            <person name="Chan M.M."/>
            <person name="Tang C.C."/>
            <person name="Onodera C.S."/>
            <person name="Deng J.M."/>
            <person name="Akiyama K."/>
            <person name="Ansari Y."/>
            <person name="Arakawa T."/>
            <person name="Banh J."/>
            <person name="Banno F."/>
            <person name="Bowser L."/>
            <person name="Brooks S.Y."/>
            <person name="Carninci P."/>
            <person name="Chao Q."/>
            <person name="Choy N."/>
            <person name="Enju A."/>
            <person name="Goldsmith A.D."/>
            <person name="Gurjal M."/>
            <person name="Hansen N.F."/>
            <person name="Hayashizaki Y."/>
            <person name="Johnson-Hopson C."/>
            <person name="Hsuan V.W."/>
            <person name="Iida K."/>
            <person name="Karnes M."/>
            <person name="Khan S."/>
            <person name="Koesema E."/>
            <person name="Ishida J."/>
            <person name="Jiang P.X."/>
            <person name="Jones T."/>
            <person name="Kawai J."/>
            <person name="Kamiya A."/>
            <person name="Meyers C."/>
            <person name="Nakajima M."/>
            <person name="Narusaka M."/>
            <person name="Seki M."/>
            <person name="Sakurai T."/>
            <person name="Satou M."/>
            <person name="Tamse R."/>
            <person name="Vaysberg M."/>
            <person name="Wallender E.K."/>
            <person name="Wong C."/>
            <person name="Yamamura Y."/>
            <person name="Yuan S."/>
            <person name="Shinozaki K."/>
            <person name="Davis R.W."/>
            <person name="Theologis A."/>
            <person name="Ecker J.R."/>
        </authorList>
    </citation>
    <scope>NUCLEOTIDE SEQUENCE [LARGE SCALE MRNA]</scope>
    <source>
        <strain>cv. Columbia</strain>
    </source>
</reference>
<reference key="4">
    <citation type="submission" date="2002-03" db="EMBL/GenBank/DDBJ databases">
        <title>Full-length cDNA from Arabidopsis thaliana.</title>
        <authorList>
            <person name="Brover V.V."/>
            <person name="Troukhan M.E."/>
            <person name="Alexandrov N.A."/>
            <person name="Lu Y.-P."/>
            <person name="Flavell R.B."/>
            <person name="Feldmann K.A."/>
        </authorList>
    </citation>
    <scope>NUCLEOTIDE SEQUENCE [LARGE SCALE MRNA]</scope>
</reference>
<reference key="5">
    <citation type="journal article" date="2001" name="Plant Physiol.">
        <title>The organization of cytoplasmic ribosomal protein genes in the Arabidopsis genome.</title>
        <authorList>
            <person name="Barakat A."/>
            <person name="Szick-Miranda K."/>
            <person name="Chang I.-F."/>
            <person name="Guyot R."/>
            <person name="Blanc G."/>
            <person name="Cooke R."/>
            <person name="Delseny M."/>
            <person name="Bailey-Serres J."/>
        </authorList>
    </citation>
    <scope>GENE FAMILY ORGANIZATION</scope>
    <scope>NOMENCLATURE</scope>
</reference>
<reference key="6">
    <citation type="journal article" date="2023" name="Plant Cell">
        <title>An updated nomenclature for plant ribosomal protein genes.</title>
        <authorList>
            <person name="Scarpin M.R."/>
            <person name="Busche M."/>
            <person name="Martinez R.E."/>
            <person name="Harper L.C."/>
            <person name="Reiser L."/>
            <person name="Szakonyi D."/>
            <person name="Merchante C."/>
            <person name="Lan T."/>
            <person name="Xiong W."/>
            <person name="Mo B."/>
            <person name="Tang G."/>
            <person name="Chen X."/>
            <person name="Bailey-Serres J."/>
            <person name="Browning K.S."/>
            <person name="Brunkard J.O."/>
        </authorList>
    </citation>
    <scope>NOMENCLATURE</scope>
</reference>
<evidence type="ECO:0000250" key="1">
    <source>
        <dbReference type="UniProtKB" id="P49209"/>
    </source>
</evidence>
<evidence type="ECO:0000303" key="2">
    <source>
    </source>
</evidence>
<evidence type="ECO:0000305" key="3"/>
<proteinExistence type="evidence at transcript level"/>
<comment type="similarity">
    <text evidence="3">Belongs to the universal ribosomal protein uL6 family.</text>
</comment>
<name>RL92_ARATH</name>